<comment type="function">
    <text evidence="1">This is one of the proteins that bind and probably mediate the attachment of the 5S RNA into the large ribosomal subunit, where it forms part of the central protuberance.</text>
</comment>
<comment type="subunit">
    <text evidence="1">Part of the 50S ribosomal subunit; part of the 5S rRNA/L5/L18/L25 subcomplex. Contacts the 5S and 23S rRNAs.</text>
</comment>
<comment type="similarity">
    <text evidence="1">Belongs to the universal ribosomal protein uL18 family.</text>
</comment>
<accession>P0C019</accession>
<accession>P02419</accession>
<name>RL18_ECOL6</name>
<gene>
    <name evidence="1" type="primary">rplR</name>
    <name type="ordered locus">c4066</name>
</gene>
<organism>
    <name type="scientific">Escherichia coli O6:H1 (strain CFT073 / ATCC 700928 / UPEC)</name>
    <dbReference type="NCBI Taxonomy" id="199310"/>
    <lineage>
        <taxon>Bacteria</taxon>
        <taxon>Pseudomonadati</taxon>
        <taxon>Pseudomonadota</taxon>
        <taxon>Gammaproteobacteria</taxon>
        <taxon>Enterobacterales</taxon>
        <taxon>Enterobacteriaceae</taxon>
        <taxon>Escherichia</taxon>
    </lineage>
</organism>
<evidence type="ECO:0000255" key="1">
    <source>
        <dbReference type="HAMAP-Rule" id="MF_01337"/>
    </source>
</evidence>
<evidence type="ECO:0000305" key="2"/>
<reference key="1">
    <citation type="journal article" date="2002" name="Proc. Natl. Acad. Sci. U.S.A.">
        <title>Extensive mosaic structure revealed by the complete genome sequence of uropathogenic Escherichia coli.</title>
        <authorList>
            <person name="Welch R.A."/>
            <person name="Burland V."/>
            <person name="Plunkett G. III"/>
            <person name="Redford P."/>
            <person name="Roesch P."/>
            <person name="Rasko D."/>
            <person name="Buckles E.L."/>
            <person name="Liou S.-R."/>
            <person name="Boutin A."/>
            <person name="Hackett J."/>
            <person name="Stroud D."/>
            <person name="Mayhew G.F."/>
            <person name="Rose D.J."/>
            <person name="Zhou S."/>
            <person name="Schwartz D.C."/>
            <person name="Perna N.T."/>
            <person name="Mobley H.L.T."/>
            <person name="Donnenberg M.S."/>
            <person name="Blattner F.R."/>
        </authorList>
    </citation>
    <scope>NUCLEOTIDE SEQUENCE [LARGE SCALE GENOMIC DNA]</scope>
    <source>
        <strain>CFT073 / ATCC 700928 / UPEC</strain>
    </source>
</reference>
<proteinExistence type="inferred from homology"/>
<keyword id="KW-1185">Reference proteome</keyword>
<keyword id="KW-0687">Ribonucleoprotein</keyword>
<keyword id="KW-0689">Ribosomal protein</keyword>
<keyword id="KW-0694">RNA-binding</keyword>
<keyword id="KW-0699">rRNA-binding</keyword>
<sequence>MDKKSARIRRATRARRKLQELGATRLVVHRTPRHIYAQVIAPNGSEVLVAASTVEKAIAEQLKYTGNKDAAAAVGKAVAERALEKGIKDVSFDRSGFQYHGRVQALADAAREAGLQF</sequence>
<protein>
    <recommendedName>
        <fullName evidence="1">Large ribosomal subunit protein uL18</fullName>
    </recommendedName>
    <alternativeName>
        <fullName evidence="2">50S ribosomal protein L18</fullName>
    </alternativeName>
</protein>
<feature type="chain" id="PRO_0000131260" description="Large ribosomal subunit protein uL18">
    <location>
        <begin position="1"/>
        <end position="117"/>
    </location>
</feature>
<dbReference type="EMBL" id="AE014075">
    <property type="protein sequence ID" value="AAN82504.1"/>
    <property type="molecule type" value="Genomic_DNA"/>
</dbReference>
<dbReference type="RefSeq" id="WP_000358960.1">
    <property type="nucleotide sequence ID" value="NZ_CP051263.1"/>
</dbReference>
<dbReference type="SMR" id="P0C019"/>
<dbReference type="STRING" id="199310.c4066"/>
<dbReference type="GeneID" id="98390426"/>
<dbReference type="KEGG" id="ecc:c4066"/>
<dbReference type="eggNOG" id="COG0256">
    <property type="taxonomic scope" value="Bacteria"/>
</dbReference>
<dbReference type="HOGENOM" id="CLU_098841_0_1_6"/>
<dbReference type="BioCyc" id="ECOL199310:C4066-MONOMER"/>
<dbReference type="Proteomes" id="UP000001410">
    <property type="component" value="Chromosome"/>
</dbReference>
<dbReference type="GO" id="GO:0022625">
    <property type="term" value="C:cytosolic large ribosomal subunit"/>
    <property type="evidence" value="ECO:0007669"/>
    <property type="project" value="TreeGrafter"/>
</dbReference>
<dbReference type="GO" id="GO:0008097">
    <property type="term" value="F:5S rRNA binding"/>
    <property type="evidence" value="ECO:0007669"/>
    <property type="project" value="TreeGrafter"/>
</dbReference>
<dbReference type="GO" id="GO:0003735">
    <property type="term" value="F:structural constituent of ribosome"/>
    <property type="evidence" value="ECO:0007669"/>
    <property type="project" value="InterPro"/>
</dbReference>
<dbReference type="GO" id="GO:0006412">
    <property type="term" value="P:translation"/>
    <property type="evidence" value="ECO:0007669"/>
    <property type="project" value="UniProtKB-UniRule"/>
</dbReference>
<dbReference type="CDD" id="cd00432">
    <property type="entry name" value="Ribosomal_L18_L5e"/>
    <property type="match status" value="1"/>
</dbReference>
<dbReference type="FunFam" id="3.30.420.100:FF:000001">
    <property type="entry name" value="50S ribosomal protein L18"/>
    <property type="match status" value="1"/>
</dbReference>
<dbReference type="Gene3D" id="3.30.420.100">
    <property type="match status" value="1"/>
</dbReference>
<dbReference type="HAMAP" id="MF_01337_B">
    <property type="entry name" value="Ribosomal_uL18_B"/>
    <property type="match status" value="1"/>
</dbReference>
<dbReference type="InterPro" id="IPR004389">
    <property type="entry name" value="Ribosomal_uL18_bac-type"/>
</dbReference>
<dbReference type="InterPro" id="IPR005484">
    <property type="entry name" value="Ribosomal_uL18_bac/euk"/>
</dbReference>
<dbReference type="NCBIfam" id="TIGR00060">
    <property type="entry name" value="L18_bact"/>
    <property type="match status" value="1"/>
</dbReference>
<dbReference type="PANTHER" id="PTHR12899">
    <property type="entry name" value="39S RIBOSOMAL PROTEIN L18, MITOCHONDRIAL"/>
    <property type="match status" value="1"/>
</dbReference>
<dbReference type="PANTHER" id="PTHR12899:SF3">
    <property type="entry name" value="LARGE RIBOSOMAL SUBUNIT PROTEIN UL18M"/>
    <property type="match status" value="1"/>
</dbReference>
<dbReference type="Pfam" id="PF00861">
    <property type="entry name" value="Ribosomal_L18p"/>
    <property type="match status" value="1"/>
</dbReference>
<dbReference type="SUPFAM" id="SSF53137">
    <property type="entry name" value="Translational machinery components"/>
    <property type="match status" value="1"/>
</dbReference>